<dbReference type="EC" id="3.1.3.16"/>
<dbReference type="EMBL" id="AB022216">
    <property type="protein sequence ID" value="BAB02728.1"/>
    <property type="molecule type" value="Genomic_DNA"/>
</dbReference>
<dbReference type="EMBL" id="CP002686">
    <property type="protein sequence ID" value="AEE75928.1"/>
    <property type="molecule type" value="Genomic_DNA"/>
</dbReference>
<dbReference type="EMBL" id="AK220861">
    <property type="protein sequence ID" value="BAD94223.1"/>
    <property type="molecule type" value="mRNA"/>
</dbReference>
<dbReference type="EMBL" id="AK228860">
    <property type="protein sequence ID" value="BAF00754.1"/>
    <property type="molecule type" value="mRNA"/>
</dbReference>
<dbReference type="RefSeq" id="NP_188351.2">
    <property type="nucleotide sequence ID" value="NM_112603.3"/>
</dbReference>
<dbReference type="SMR" id="Q9LUU7"/>
<dbReference type="BioGRID" id="6319">
    <property type="interactions" value="1"/>
</dbReference>
<dbReference type="FunCoup" id="Q9LUU7">
    <property type="interactions" value="50"/>
</dbReference>
<dbReference type="IntAct" id="Q9LUU7">
    <property type="interactions" value="1"/>
</dbReference>
<dbReference type="MINT" id="Q9LUU7"/>
<dbReference type="STRING" id="3702.Q9LUU7"/>
<dbReference type="PaxDb" id="3702-AT3G17250.1"/>
<dbReference type="ProteomicsDB" id="248713"/>
<dbReference type="EnsemblPlants" id="AT3G17250.1">
    <property type="protein sequence ID" value="AT3G17250.1"/>
    <property type="gene ID" value="AT3G17250"/>
</dbReference>
<dbReference type="GeneID" id="820986"/>
<dbReference type="Gramene" id="AT3G17250.1">
    <property type="protein sequence ID" value="AT3G17250.1"/>
    <property type="gene ID" value="AT3G17250"/>
</dbReference>
<dbReference type="KEGG" id="ath:AT3G17250"/>
<dbReference type="Araport" id="AT3G17250"/>
<dbReference type="TAIR" id="AT3G17250"/>
<dbReference type="eggNOG" id="KOG0698">
    <property type="taxonomic scope" value="Eukaryota"/>
</dbReference>
<dbReference type="HOGENOM" id="CLU_013173_21_0_1"/>
<dbReference type="InParanoid" id="Q9LUU7"/>
<dbReference type="OMA" id="EIRIHDS"/>
<dbReference type="PhylomeDB" id="Q9LUU7"/>
<dbReference type="PRO" id="PR:Q9LUU7"/>
<dbReference type="Proteomes" id="UP000006548">
    <property type="component" value="Chromosome 3"/>
</dbReference>
<dbReference type="ExpressionAtlas" id="Q9LUU7">
    <property type="expression patterns" value="baseline and differential"/>
</dbReference>
<dbReference type="GO" id="GO:0046872">
    <property type="term" value="F:metal ion binding"/>
    <property type="evidence" value="ECO:0007669"/>
    <property type="project" value="UniProtKB-KW"/>
</dbReference>
<dbReference type="GO" id="GO:0004722">
    <property type="term" value="F:protein serine/threonine phosphatase activity"/>
    <property type="evidence" value="ECO:0007669"/>
    <property type="project" value="UniProtKB-EC"/>
</dbReference>
<dbReference type="CDD" id="cd00143">
    <property type="entry name" value="PP2Cc"/>
    <property type="match status" value="1"/>
</dbReference>
<dbReference type="FunFam" id="3.60.40.10:FF:000004">
    <property type="entry name" value="Probable protein phosphatase 2C 22"/>
    <property type="match status" value="1"/>
</dbReference>
<dbReference type="Gene3D" id="3.60.40.10">
    <property type="entry name" value="PPM-type phosphatase domain"/>
    <property type="match status" value="1"/>
</dbReference>
<dbReference type="InterPro" id="IPR015655">
    <property type="entry name" value="PP2C"/>
</dbReference>
<dbReference type="InterPro" id="IPR000222">
    <property type="entry name" value="PP2C_BS"/>
</dbReference>
<dbReference type="InterPro" id="IPR036457">
    <property type="entry name" value="PPM-type-like_dom_sf"/>
</dbReference>
<dbReference type="InterPro" id="IPR001932">
    <property type="entry name" value="PPM-type_phosphatase-like_dom"/>
</dbReference>
<dbReference type="PANTHER" id="PTHR13832">
    <property type="entry name" value="PROTEIN PHOSPHATASE 2C"/>
    <property type="match status" value="1"/>
</dbReference>
<dbReference type="PANTHER" id="PTHR13832:SF620">
    <property type="entry name" value="PROTEIN PHOSPHATASE 2C 13-RELATED"/>
    <property type="match status" value="1"/>
</dbReference>
<dbReference type="Pfam" id="PF00481">
    <property type="entry name" value="PP2C"/>
    <property type="match status" value="1"/>
</dbReference>
<dbReference type="SMART" id="SM00332">
    <property type="entry name" value="PP2Cc"/>
    <property type="match status" value="1"/>
</dbReference>
<dbReference type="SUPFAM" id="SSF81606">
    <property type="entry name" value="PP2C-like"/>
    <property type="match status" value="1"/>
</dbReference>
<dbReference type="PROSITE" id="PS01032">
    <property type="entry name" value="PPM_1"/>
    <property type="match status" value="1"/>
</dbReference>
<dbReference type="PROSITE" id="PS51746">
    <property type="entry name" value="PPM_2"/>
    <property type="match status" value="1"/>
</dbReference>
<protein>
    <recommendedName>
        <fullName>Probable protein phosphatase 2C 43</fullName>
        <shortName>AtPP2C43</shortName>
        <ecNumber>3.1.3.16</ecNumber>
    </recommendedName>
</protein>
<accession>Q9LUU7</accession>
<accession>Q56ZV0</accession>
<sequence length="422" mass="47599">MRTSKASVTQTWLLYTQLCLWKDLIIRYVRQIIRRAKSMLFSQNMVADSAEISVIDVKSHLSVAKDPSNFQIAEIRIHDSICIDIPSSEETPLLESIKSCSATTIEEHVTEFVPNISSGSYADKGDYREYMEDEHICIDDLSDHLGSSFYRFPVPMAFYGVFDGHGGSDASQYIKENAMSLFFEDAVFRQSPSVVDSLFLKELETSHREAYRLADLAMEDERIVSSSCGTTALTALVIGRHLMVANVGDCRAVLCRKGKAVDMSFDHKSTFEPERRRVEDLGGYFEGEYLYGDLAVTRALGDWSIKRFSPLGESLSPLISDPDIQQMILTEEDEFLIMGCDGVWDVMTSQYAVTFVRQGLRRHGDPRRCAMELGREALRLDSSDNVTVVVICFSSSPAPQRRRIRFCVSDEARARLQTMLEG</sequence>
<feature type="chain" id="PRO_0000367967" description="Probable protein phosphatase 2C 43">
    <location>
        <begin position="1"/>
        <end position="422"/>
    </location>
</feature>
<feature type="domain" description="PPM-type phosphatase" evidence="2">
    <location>
        <begin position="117"/>
        <end position="393"/>
    </location>
</feature>
<feature type="binding site" evidence="1">
    <location>
        <position position="163"/>
    </location>
    <ligand>
        <name>Mn(2+)</name>
        <dbReference type="ChEBI" id="CHEBI:29035"/>
        <label>1</label>
    </ligand>
</feature>
<feature type="binding site" evidence="1">
    <location>
        <position position="163"/>
    </location>
    <ligand>
        <name>Mn(2+)</name>
        <dbReference type="ChEBI" id="CHEBI:29035"/>
        <label>2</label>
    </ligand>
</feature>
<feature type="binding site" evidence="1">
    <location>
        <position position="164"/>
    </location>
    <ligand>
        <name>Mn(2+)</name>
        <dbReference type="ChEBI" id="CHEBI:29035"/>
        <label>1</label>
    </ligand>
</feature>
<feature type="binding site" evidence="1">
    <location>
        <position position="341"/>
    </location>
    <ligand>
        <name>Mn(2+)</name>
        <dbReference type="ChEBI" id="CHEBI:29035"/>
        <label>2</label>
    </ligand>
</feature>
<feature type="binding site" evidence="1">
    <location>
        <position position="384"/>
    </location>
    <ligand>
        <name>Mn(2+)</name>
        <dbReference type="ChEBI" id="CHEBI:29035"/>
        <label>2</label>
    </ligand>
</feature>
<feature type="sequence conflict" description="In Ref. 3; BAD94223." evidence="3" ref="3">
    <original>W</original>
    <variation>S</variation>
    <location>
        <position position="303"/>
    </location>
</feature>
<comment type="catalytic activity">
    <reaction>
        <text>O-phospho-L-seryl-[protein] + H2O = L-seryl-[protein] + phosphate</text>
        <dbReference type="Rhea" id="RHEA:20629"/>
        <dbReference type="Rhea" id="RHEA-COMP:9863"/>
        <dbReference type="Rhea" id="RHEA-COMP:11604"/>
        <dbReference type="ChEBI" id="CHEBI:15377"/>
        <dbReference type="ChEBI" id="CHEBI:29999"/>
        <dbReference type="ChEBI" id="CHEBI:43474"/>
        <dbReference type="ChEBI" id="CHEBI:83421"/>
        <dbReference type="EC" id="3.1.3.16"/>
    </reaction>
</comment>
<comment type="catalytic activity">
    <reaction>
        <text>O-phospho-L-threonyl-[protein] + H2O = L-threonyl-[protein] + phosphate</text>
        <dbReference type="Rhea" id="RHEA:47004"/>
        <dbReference type="Rhea" id="RHEA-COMP:11060"/>
        <dbReference type="Rhea" id="RHEA-COMP:11605"/>
        <dbReference type="ChEBI" id="CHEBI:15377"/>
        <dbReference type="ChEBI" id="CHEBI:30013"/>
        <dbReference type="ChEBI" id="CHEBI:43474"/>
        <dbReference type="ChEBI" id="CHEBI:61977"/>
        <dbReference type="EC" id="3.1.3.16"/>
    </reaction>
</comment>
<comment type="cofactor">
    <cofactor evidence="1">
        <name>Mg(2+)</name>
        <dbReference type="ChEBI" id="CHEBI:18420"/>
    </cofactor>
    <cofactor evidence="1">
        <name>Mn(2+)</name>
        <dbReference type="ChEBI" id="CHEBI:29035"/>
    </cofactor>
    <text evidence="1">Binds 2 magnesium or manganese ions per subunit.</text>
</comment>
<comment type="similarity">
    <text evidence="3">Belongs to the PP2C family.</text>
</comment>
<evidence type="ECO:0000250" key="1"/>
<evidence type="ECO:0000255" key="2">
    <source>
        <dbReference type="PROSITE-ProRule" id="PRU01082"/>
    </source>
</evidence>
<evidence type="ECO:0000305" key="3"/>
<name>P2C43_ARATH</name>
<gene>
    <name type="ordered locus">At3g17250</name>
    <name type="ORF">MGD8.13</name>
    <name type="ORF">MGD8.8</name>
</gene>
<organism>
    <name type="scientific">Arabidopsis thaliana</name>
    <name type="common">Mouse-ear cress</name>
    <dbReference type="NCBI Taxonomy" id="3702"/>
    <lineage>
        <taxon>Eukaryota</taxon>
        <taxon>Viridiplantae</taxon>
        <taxon>Streptophyta</taxon>
        <taxon>Embryophyta</taxon>
        <taxon>Tracheophyta</taxon>
        <taxon>Spermatophyta</taxon>
        <taxon>Magnoliopsida</taxon>
        <taxon>eudicotyledons</taxon>
        <taxon>Gunneridae</taxon>
        <taxon>Pentapetalae</taxon>
        <taxon>rosids</taxon>
        <taxon>malvids</taxon>
        <taxon>Brassicales</taxon>
        <taxon>Brassicaceae</taxon>
        <taxon>Camelineae</taxon>
        <taxon>Arabidopsis</taxon>
    </lineage>
</organism>
<reference key="1">
    <citation type="journal article" date="2000" name="DNA Res.">
        <title>Structural analysis of Arabidopsis thaliana chromosome 3. I. Sequence features of the regions of 4,504,864 bp covered by sixty P1 and TAC clones.</title>
        <authorList>
            <person name="Sato S."/>
            <person name="Nakamura Y."/>
            <person name="Kaneko T."/>
            <person name="Katoh T."/>
            <person name="Asamizu E."/>
            <person name="Tabata S."/>
        </authorList>
    </citation>
    <scope>NUCLEOTIDE SEQUENCE [LARGE SCALE GENOMIC DNA]</scope>
    <source>
        <strain>cv. Columbia</strain>
    </source>
</reference>
<reference key="2">
    <citation type="journal article" date="2017" name="Plant J.">
        <title>Araport11: a complete reannotation of the Arabidopsis thaliana reference genome.</title>
        <authorList>
            <person name="Cheng C.Y."/>
            <person name="Krishnakumar V."/>
            <person name="Chan A.P."/>
            <person name="Thibaud-Nissen F."/>
            <person name="Schobel S."/>
            <person name="Town C.D."/>
        </authorList>
    </citation>
    <scope>GENOME REANNOTATION</scope>
    <source>
        <strain>cv. Columbia</strain>
    </source>
</reference>
<reference key="3">
    <citation type="submission" date="2006-07" db="EMBL/GenBank/DDBJ databases">
        <title>Large-scale analysis of RIKEN Arabidopsis full-length (RAFL) cDNAs.</title>
        <authorList>
            <person name="Totoki Y."/>
            <person name="Seki M."/>
            <person name="Ishida J."/>
            <person name="Nakajima M."/>
            <person name="Enju A."/>
            <person name="Kamiya A."/>
            <person name="Narusaka M."/>
            <person name="Shin-i T."/>
            <person name="Nakagawa M."/>
            <person name="Sakamoto N."/>
            <person name="Oishi K."/>
            <person name="Kohara Y."/>
            <person name="Kobayashi M."/>
            <person name="Toyoda A."/>
            <person name="Sakaki Y."/>
            <person name="Sakurai T."/>
            <person name="Iida K."/>
            <person name="Akiyama K."/>
            <person name="Satou M."/>
            <person name="Toyoda T."/>
            <person name="Konagaya A."/>
            <person name="Carninci P."/>
            <person name="Kawai J."/>
            <person name="Hayashizaki Y."/>
            <person name="Shinozaki K."/>
        </authorList>
    </citation>
    <scope>NUCLEOTIDE SEQUENCE [LARGE SCALE MRNA]</scope>
    <source>
        <strain>cv. Columbia</strain>
    </source>
</reference>
<reference key="4">
    <citation type="journal article" date="2008" name="BMC Genomics">
        <title>Genome-wide and expression analysis of protein phosphatase 2C in rice and Arabidopsis.</title>
        <authorList>
            <person name="Xue T."/>
            <person name="Wang D."/>
            <person name="Zhang S."/>
            <person name="Ehlting J."/>
            <person name="Ni F."/>
            <person name="Jacab S."/>
            <person name="Zheng C."/>
            <person name="Zhong Y."/>
        </authorList>
    </citation>
    <scope>GENE FAMILY</scope>
    <scope>NOMENCLATURE</scope>
</reference>
<keyword id="KW-0378">Hydrolase</keyword>
<keyword id="KW-0460">Magnesium</keyword>
<keyword id="KW-0464">Manganese</keyword>
<keyword id="KW-0479">Metal-binding</keyword>
<keyword id="KW-0904">Protein phosphatase</keyword>
<keyword id="KW-1185">Reference proteome</keyword>
<proteinExistence type="evidence at transcript level"/>